<reference key="1">
    <citation type="journal article" date="2009" name="Genome Biol.">
        <title>Genomic and genetic analyses of diversity and plant interactions of Pseudomonas fluorescens.</title>
        <authorList>
            <person name="Silby M.W."/>
            <person name="Cerdeno-Tarraga A.M."/>
            <person name="Vernikos G.S."/>
            <person name="Giddens S.R."/>
            <person name="Jackson R.W."/>
            <person name="Preston G.M."/>
            <person name="Zhang X.-X."/>
            <person name="Moon C.D."/>
            <person name="Gehrig S.M."/>
            <person name="Godfrey S.A.C."/>
            <person name="Knight C.G."/>
            <person name="Malone J.G."/>
            <person name="Robinson Z."/>
            <person name="Spiers A.J."/>
            <person name="Harris S."/>
            <person name="Challis G.L."/>
            <person name="Yaxley A.M."/>
            <person name="Harris D."/>
            <person name="Seeger K."/>
            <person name="Murphy L."/>
            <person name="Rutter S."/>
            <person name="Squares R."/>
            <person name="Quail M.A."/>
            <person name="Saunders E."/>
            <person name="Mavromatis K."/>
            <person name="Brettin T.S."/>
            <person name="Bentley S.D."/>
            <person name="Hothersall J."/>
            <person name="Stephens E."/>
            <person name="Thomas C.M."/>
            <person name="Parkhill J."/>
            <person name="Levy S.B."/>
            <person name="Rainey P.B."/>
            <person name="Thomson N.R."/>
        </authorList>
    </citation>
    <scope>NUCLEOTIDE SEQUENCE [LARGE SCALE GENOMIC DNA]</scope>
    <source>
        <strain>SBW25</strain>
    </source>
</reference>
<sequence>MADVNKVVLAYSGGLDTSVILKWLQDTYNCEVVTFTADLGQGEEVEPARAKAQAMGVKEIYIDDLREEFVRDFVFPMFRANTVYEGEYLLGTSIARPLIAKRLIEIANETGADAISHGATGKGNDQVRFELGAYALKPGVKVIAPWREWDLLSREKLMDYAEKHAIPIERHGKKKSPYSMDANLLHISYEGGVLEDTWTEHEEDMWKWTVSPENAPDKPQYLELTYRNGDIVALDGVEMTPATVLATLNRIGGEHGIGRLDIVENRYVGMKSRGCYETPGGTIMLRAHRAIESITLDREVAHLKDELMPKYASLIYTGYWWSPERLMLQQMIDASQAHVNGVVRLKLYKGNVIVTGRKSDDSLFDANIATFEEDGGAYNQADAAGFIKLNALRMRIAANKGRSLF</sequence>
<protein>
    <recommendedName>
        <fullName evidence="1">Argininosuccinate synthase</fullName>
        <ecNumber evidence="1">6.3.4.5</ecNumber>
    </recommendedName>
    <alternativeName>
        <fullName evidence="1">Citrulline--aspartate ligase</fullName>
    </alternativeName>
</protein>
<evidence type="ECO:0000255" key="1">
    <source>
        <dbReference type="HAMAP-Rule" id="MF_00005"/>
    </source>
</evidence>
<gene>
    <name evidence="1" type="primary">argG</name>
    <name type="ordered locus">PFLU_1156</name>
</gene>
<comment type="catalytic activity">
    <reaction evidence="1">
        <text>L-citrulline + L-aspartate + ATP = 2-(N(omega)-L-arginino)succinate + AMP + diphosphate + H(+)</text>
        <dbReference type="Rhea" id="RHEA:10932"/>
        <dbReference type="ChEBI" id="CHEBI:15378"/>
        <dbReference type="ChEBI" id="CHEBI:29991"/>
        <dbReference type="ChEBI" id="CHEBI:30616"/>
        <dbReference type="ChEBI" id="CHEBI:33019"/>
        <dbReference type="ChEBI" id="CHEBI:57472"/>
        <dbReference type="ChEBI" id="CHEBI:57743"/>
        <dbReference type="ChEBI" id="CHEBI:456215"/>
        <dbReference type="EC" id="6.3.4.5"/>
    </reaction>
</comment>
<comment type="pathway">
    <text evidence="1">Amino-acid biosynthesis; L-arginine biosynthesis; L-arginine from L-ornithine and carbamoyl phosphate: step 2/3.</text>
</comment>
<comment type="subunit">
    <text evidence="1">Homotetramer.</text>
</comment>
<comment type="subcellular location">
    <subcellularLocation>
        <location evidence="1">Cytoplasm</location>
    </subcellularLocation>
</comment>
<comment type="similarity">
    <text evidence="1">Belongs to the argininosuccinate synthase family. Type 1 subfamily.</text>
</comment>
<accession>C3KBZ2</accession>
<feature type="chain" id="PRO_1000201688" description="Argininosuccinate synthase">
    <location>
        <begin position="1"/>
        <end position="405"/>
    </location>
</feature>
<feature type="binding site" evidence="1">
    <location>
        <begin position="10"/>
        <end position="18"/>
    </location>
    <ligand>
        <name>ATP</name>
        <dbReference type="ChEBI" id="CHEBI:30616"/>
    </ligand>
</feature>
<feature type="binding site" evidence="1">
    <location>
        <position position="37"/>
    </location>
    <ligand>
        <name>ATP</name>
        <dbReference type="ChEBI" id="CHEBI:30616"/>
    </ligand>
</feature>
<feature type="binding site" evidence="1">
    <location>
        <position position="88"/>
    </location>
    <ligand>
        <name>L-citrulline</name>
        <dbReference type="ChEBI" id="CHEBI:57743"/>
    </ligand>
</feature>
<feature type="binding site" evidence="1">
    <location>
        <position position="93"/>
    </location>
    <ligand>
        <name>L-citrulline</name>
        <dbReference type="ChEBI" id="CHEBI:57743"/>
    </ligand>
</feature>
<feature type="binding site" evidence="1">
    <location>
        <position position="118"/>
    </location>
    <ligand>
        <name>ATP</name>
        <dbReference type="ChEBI" id="CHEBI:30616"/>
    </ligand>
</feature>
<feature type="binding site" evidence="1">
    <location>
        <position position="120"/>
    </location>
    <ligand>
        <name>L-aspartate</name>
        <dbReference type="ChEBI" id="CHEBI:29991"/>
    </ligand>
</feature>
<feature type="binding site" evidence="1">
    <location>
        <position position="124"/>
    </location>
    <ligand>
        <name>L-aspartate</name>
        <dbReference type="ChEBI" id="CHEBI:29991"/>
    </ligand>
</feature>
<feature type="binding site" evidence="1">
    <location>
        <position position="124"/>
    </location>
    <ligand>
        <name>L-citrulline</name>
        <dbReference type="ChEBI" id="CHEBI:57743"/>
    </ligand>
</feature>
<feature type="binding site" evidence="1">
    <location>
        <position position="125"/>
    </location>
    <ligand>
        <name>L-aspartate</name>
        <dbReference type="ChEBI" id="CHEBI:29991"/>
    </ligand>
</feature>
<feature type="binding site" evidence="1">
    <location>
        <position position="128"/>
    </location>
    <ligand>
        <name>L-citrulline</name>
        <dbReference type="ChEBI" id="CHEBI:57743"/>
    </ligand>
</feature>
<feature type="binding site" evidence="1">
    <location>
        <position position="179"/>
    </location>
    <ligand>
        <name>L-citrulline</name>
        <dbReference type="ChEBI" id="CHEBI:57743"/>
    </ligand>
</feature>
<feature type="binding site" evidence="1">
    <location>
        <position position="188"/>
    </location>
    <ligand>
        <name>L-citrulline</name>
        <dbReference type="ChEBI" id="CHEBI:57743"/>
    </ligand>
</feature>
<feature type="binding site" evidence="1">
    <location>
        <position position="264"/>
    </location>
    <ligand>
        <name>L-citrulline</name>
        <dbReference type="ChEBI" id="CHEBI:57743"/>
    </ligand>
</feature>
<feature type="binding site" evidence="1">
    <location>
        <position position="276"/>
    </location>
    <ligand>
        <name>L-citrulline</name>
        <dbReference type="ChEBI" id="CHEBI:57743"/>
    </ligand>
</feature>
<organism>
    <name type="scientific">Pseudomonas fluorescens (strain SBW25)</name>
    <dbReference type="NCBI Taxonomy" id="216595"/>
    <lineage>
        <taxon>Bacteria</taxon>
        <taxon>Pseudomonadati</taxon>
        <taxon>Pseudomonadota</taxon>
        <taxon>Gammaproteobacteria</taxon>
        <taxon>Pseudomonadales</taxon>
        <taxon>Pseudomonadaceae</taxon>
        <taxon>Pseudomonas</taxon>
    </lineage>
</organism>
<keyword id="KW-0028">Amino-acid biosynthesis</keyword>
<keyword id="KW-0055">Arginine biosynthesis</keyword>
<keyword id="KW-0067">ATP-binding</keyword>
<keyword id="KW-0963">Cytoplasm</keyword>
<keyword id="KW-0436">Ligase</keyword>
<keyword id="KW-0547">Nucleotide-binding</keyword>
<dbReference type="EC" id="6.3.4.5" evidence="1"/>
<dbReference type="EMBL" id="AM181176">
    <property type="protein sequence ID" value="CAY47418.1"/>
    <property type="molecule type" value="Genomic_DNA"/>
</dbReference>
<dbReference type="RefSeq" id="WP_012722490.1">
    <property type="nucleotide sequence ID" value="NC_012660.1"/>
</dbReference>
<dbReference type="SMR" id="C3KBZ2"/>
<dbReference type="STRING" id="294.SRM1_04452"/>
<dbReference type="eggNOG" id="COG0137">
    <property type="taxonomic scope" value="Bacteria"/>
</dbReference>
<dbReference type="HOGENOM" id="CLU_032784_4_2_6"/>
<dbReference type="OrthoDB" id="9801641at2"/>
<dbReference type="UniPathway" id="UPA00068">
    <property type="reaction ID" value="UER00113"/>
</dbReference>
<dbReference type="GO" id="GO:0005737">
    <property type="term" value="C:cytoplasm"/>
    <property type="evidence" value="ECO:0007669"/>
    <property type="project" value="UniProtKB-SubCell"/>
</dbReference>
<dbReference type="GO" id="GO:0004055">
    <property type="term" value="F:argininosuccinate synthase activity"/>
    <property type="evidence" value="ECO:0007669"/>
    <property type="project" value="UniProtKB-UniRule"/>
</dbReference>
<dbReference type="GO" id="GO:0005524">
    <property type="term" value="F:ATP binding"/>
    <property type="evidence" value="ECO:0007669"/>
    <property type="project" value="UniProtKB-UniRule"/>
</dbReference>
<dbReference type="GO" id="GO:0000053">
    <property type="term" value="P:argininosuccinate metabolic process"/>
    <property type="evidence" value="ECO:0007669"/>
    <property type="project" value="TreeGrafter"/>
</dbReference>
<dbReference type="GO" id="GO:0006526">
    <property type="term" value="P:L-arginine biosynthetic process"/>
    <property type="evidence" value="ECO:0007669"/>
    <property type="project" value="UniProtKB-UniRule"/>
</dbReference>
<dbReference type="GO" id="GO:0000050">
    <property type="term" value="P:urea cycle"/>
    <property type="evidence" value="ECO:0007669"/>
    <property type="project" value="TreeGrafter"/>
</dbReference>
<dbReference type="CDD" id="cd01999">
    <property type="entry name" value="ASS"/>
    <property type="match status" value="1"/>
</dbReference>
<dbReference type="FunFam" id="1.20.5.470:FF:000001">
    <property type="entry name" value="Argininosuccinate synthase"/>
    <property type="match status" value="1"/>
</dbReference>
<dbReference type="FunFam" id="3.40.50.620:FF:000019">
    <property type="entry name" value="Argininosuccinate synthase"/>
    <property type="match status" value="1"/>
</dbReference>
<dbReference type="FunFam" id="3.90.1260.10:FF:000001">
    <property type="entry name" value="Argininosuccinate synthase"/>
    <property type="match status" value="1"/>
</dbReference>
<dbReference type="Gene3D" id="3.90.1260.10">
    <property type="entry name" value="Argininosuccinate synthetase, chain A, domain 2"/>
    <property type="match status" value="1"/>
</dbReference>
<dbReference type="Gene3D" id="3.40.50.620">
    <property type="entry name" value="HUPs"/>
    <property type="match status" value="1"/>
</dbReference>
<dbReference type="Gene3D" id="1.20.5.470">
    <property type="entry name" value="Single helix bin"/>
    <property type="match status" value="1"/>
</dbReference>
<dbReference type="HAMAP" id="MF_00005">
    <property type="entry name" value="Arg_succ_synth_type1"/>
    <property type="match status" value="1"/>
</dbReference>
<dbReference type="InterPro" id="IPR048268">
    <property type="entry name" value="Arginosuc_syn_C"/>
</dbReference>
<dbReference type="InterPro" id="IPR048267">
    <property type="entry name" value="Arginosuc_syn_N"/>
</dbReference>
<dbReference type="InterPro" id="IPR001518">
    <property type="entry name" value="Arginosuc_synth"/>
</dbReference>
<dbReference type="InterPro" id="IPR018223">
    <property type="entry name" value="Arginosuc_synth_CS"/>
</dbReference>
<dbReference type="InterPro" id="IPR023434">
    <property type="entry name" value="Arginosuc_synth_type_1_subfam"/>
</dbReference>
<dbReference type="InterPro" id="IPR024074">
    <property type="entry name" value="AS_cat/multimer_dom_body"/>
</dbReference>
<dbReference type="InterPro" id="IPR014729">
    <property type="entry name" value="Rossmann-like_a/b/a_fold"/>
</dbReference>
<dbReference type="NCBIfam" id="TIGR00032">
    <property type="entry name" value="argG"/>
    <property type="match status" value="1"/>
</dbReference>
<dbReference type="NCBIfam" id="NF001770">
    <property type="entry name" value="PRK00509.1"/>
    <property type="match status" value="1"/>
</dbReference>
<dbReference type="PANTHER" id="PTHR11587">
    <property type="entry name" value="ARGININOSUCCINATE SYNTHASE"/>
    <property type="match status" value="1"/>
</dbReference>
<dbReference type="PANTHER" id="PTHR11587:SF2">
    <property type="entry name" value="ARGININOSUCCINATE SYNTHASE"/>
    <property type="match status" value="1"/>
</dbReference>
<dbReference type="Pfam" id="PF20979">
    <property type="entry name" value="Arginosuc_syn_C"/>
    <property type="match status" value="1"/>
</dbReference>
<dbReference type="Pfam" id="PF00764">
    <property type="entry name" value="Arginosuc_synth"/>
    <property type="match status" value="1"/>
</dbReference>
<dbReference type="SUPFAM" id="SSF52402">
    <property type="entry name" value="Adenine nucleotide alpha hydrolases-like"/>
    <property type="match status" value="1"/>
</dbReference>
<dbReference type="SUPFAM" id="SSF69864">
    <property type="entry name" value="Argininosuccinate synthetase, C-terminal domain"/>
    <property type="match status" value="1"/>
</dbReference>
<dbReference type="PROSITE" id="PS00564">
    <property type="entry name" value="ARGININOSUCCIN_SYN_1"/>
    <property type="match status" value="1"/>
</dbReference>
<dbReference type="PROSITE" id="PS00565">
    <property type="entry name" value="ARGININOSUCCIN_SYN_2"/>
    <property type="match status" value="1"/>
</dbReference>
<name>ASSY_PSEFS</name>
<proteinExistence type="inferred from homology"/>